<name>NUOD_PROA2</name>
<organism>
    <name type="scientific">Prosthecochloris aestuarii (strain DSM 271 / SK 413)</name>
    <dbReference type="NCBI Taxonomy" id="290512"/>
    <lineage>
        <taxon>Bacteria</taxon>
        <taxon>Pseudomonadati</taxon>
        <taxon>Chlorobiota</taxon>
        <taxon>Chlorobiia</taxon>
        <taxon>Chlorobiales</taxon>
        <taxon>Chlorobiaceae</taxon>
        <taxon>Prosthecochloris</taxon>
    </lineage>
</organism>
<accession>B4S754</accession>
<feature type="chain" id="PRO_0000357889" description="NADH-quinone oxidoreductase subunit D">
    <location>
        <begin position="1"/>
        <end position="400"/>
    </location>
</feature>
<reference key="1">
    <citation type="submission" date="2008-06" db="EMBL/GenBank/DDBJ databases">
        <title>Complete sequence of chromosome of Prosthecochloris aestuarii DSM 271.</title>
        <authorList>
            <consortium name="US DOE Joint Genome Institute"/>
            <person name="Lucas S."/>
            <person name="Copeland A."/>
            <person name="Lapidus A."/>
            <person name="Glavina del Rio T."/>
            <person name="Dalin E."/>
            <person name="Tice H."/>
            <person name="Bruce D."/>
            <person name="Goodwin L."/>
            <person name="Pitluck S."/>
            <person name="Schmutz J."/>
            <person name="Larimer F."/>
            <person name="Land M."/>
            <person name="Hauser L."/>
            <person name="Kyrpides N."/>
            <person name="Anderson I."/>
            <person name="Liu Z."/>
            <person name="Li T."/>
            <person name="Zhao F."/>
            <person name="Overmann J."/>
            <person name="Bryant D.A."/>
            <person name="Richardson P."/>
        </authorList>
    </citation>
    <scope>NUCLEOTIDE SEQUENCE [LARGE SCALE GENOMIC DNA]</scope>
    <source>
        <strain>DSM 271 / SK 413</strain>
    </source>
</reference>
<dbReference type="EC" id="7.1.1.-" evidence="2"/>
<dbReference type="EMBL" id="CP001108">
    <property type="protein sequence ID" value="ACF45891.1"/>
    <property type="molecule type" value="Genomic_DNA"/>
</dbReference>
<dbReference type="RefSeq" id="WP_012505428.1">
    <property type="nucleotide sequence ID" value="NC_011059.1"/>
</dbReference>
<dbReference type="SMR" id="B4S754"/>
<dbReference type="STRING" id="290512.Paes_0845"/>
<dbReference type="KEGG" id="paa:Paes_0845"/>
<dbReference type="eggNOG" id="COG0649">
    <property type="taxonomic scope" value="Bacteria"/>
</dbReference>
<dbReference type="HOGENOM" id="CLU_015134_1_2_10"/>
<dbReference type="Proteomes" id="UP000002725">
    <property type="component" value="Chromosome"/>
</dbReference>
<dbReference type="GO" id="GO:0005886">
    <property type="term" value="C:plasma membrane"/>
    <property type="evidence" value="ECO:0007669"/>
    <property type="project" value="UniProtKB-SubCell"/>
</dbReference>
<dbReference type="GO" id="GO:0051287">
    <property type="term" value="F:NAD binding"/>
    <property type="evidence" value="ECO:0007669"/>
    <property type="project" value="InterPro"/>
</dbReference>
<dbReference type="GO" id="GO:0050136">
    <property type="term" value="F:NADH:ubiquinone reductase (non-electrogenic) activity"/>
    <property type="evidence" value="ECO:0007669"/>
    <property type="project" value="UniProtKB-UniRule"/>
</dbReference>
<dbReference type="GO" id="GO:0048038">
    <property type="term" value="F:quinone binding"/>
    <property type="evidence" value="ECO:0007669"/>
    <property type="project" value="UniProtKB-KW"/>
</dbReference>
<dbReference type="Gene3D" id="1.10.645.10">
    <property type="entry name" value="Cytochrome-c3 Hydrogenase, chain B"/>
    <property type="match status" value="1"/>
</dbReference>
<dbReference type="HAMAP" id="MF_01358">
    <property type="entry name" value="NDH1_NuoD"/>
    <property type="match status" value="1"/>
</dbReference>
<dbReference type="InterPro" id="IPR001135">
    <property type="entry name" value="NADH_Q_OxRdtase_suD"/>
</dbReference>
<dbReference type="InterPro" id="IPR022885">
    <property type="entry name" value="NDH1_su_D/H"/>
</dbReference>
<dbReference type="InterPro" id="IPR029014">
    <property type="entry name" value="NiFe-Hase_large"/>
</dbReference>
<dbReference type="NCBIfam" id="NF004739">
    <property type="entry name" value="PRK06075.1"/>
    <property type="match status" value="1"/>
</dbReference>
<dbReference type="PANTHER" id="PTHR11993:SF10">
    <property type="entry name" value="NADH DEHYDROGENASE [UBIQUINONE] IRON-SULFUR PROTEIN 2, MITOCHONDRIAL"/>
    <property type="match status" value="1"/>
</dbReference>
<dbReference type="PANTHER" id="PTHR11993">
    <property type="entry name" value="NADH-UBIQUINONE OXIDOREDUCTASE 49 KDA SUBUNIT"/>
    <property type="match status" value="1"/>
</dbReference>
<dbReference type="Pfam" id="PF00346">
    <property type="entry name" value="Complex1_49kDa"/>
    <property type="match status" value="2"/>
</dbReference>
<dbReference type="SUPFAM" id="SSF56762">
    <property type="entry name" value="HydB/Nqo4-like"/>
    <property type="match status" value="1"/>
</dbReference>
<gene>
    <name evidence="2" type="primary">nuoD</name>
    <name type="ordered locus">Paes_0845</name>
</gene>
<sequence>MQELEQAVNRSVRVIPQGEGRVTIEKDLSSEEMILNMGPQHPSTHGVLRLECKTDGEVVTEAEPYLGYLHRCFEKHAEVVDYPGIVPFVDRMDYLAAMNSEFAYCIAVEKLLDVEIPRRVEFMRVIVSELNRIASHLVAIGTYAIDLGAFTPFLFCFRDREHIMSLLEWASGARMLYNYIWIGGASFDFPPGFKERTAEFVNYFRPKALELQRLLTENEIFVKRTKGIGMMPPDVAVNYGWSGPMLRGSGVEWDLRKHDPYSIYPELDFKVCVPDGKHSDIGDSLSRHLVRAYEMVESLSMIEQCLDKMPDANGFDPRSAIAKRIRPKAGEVYGRAENPRGELGFYIVSDGKSTKPVRCKARSSCFVNLSAMKELSMGQLIPDLVAIIGSIDIVLGEVDR</sequence>
<keyword id="KW-0997">Cell inner membrane</keyword>
<keyword id="KW-1003">Cell membrane</keyword>
<keyword id="KW-0472">Membrane</keyword>
<keyword id="KW-0520">NAD</keyword>
<keyword id="KW-0874">Quinone</keyword>
<keyword id="KW-1278">Translocase</keyword>
<keyword id="KW-0813">Transport</keyword>
<comment type="function">
    <text evidence="1">NDH-1 shuttles electrons from NADH, via FMN and iron-sulfur (Fe-S) centers, to quinones in the respiratory chain. The immediate electron acceptor for the enzyme in this species is believed to be menaquinone. Couples the redox reaction to proton translocation (for every two electrons transferred, four hydrogen ions are translocated across the cytoplasmic membrane), and thus conserves the redox energy in a proton gradient (By similarity).</text>
</comment>
<comment type="catalytic activity">
    <reaction evidence="2">
        <text>a quinone + NADH + 5 H(+)(in) = a quinol + NAD(+) + 4 H(+)(out)</text>
        <dbReference type="Rhea" id="RHEA:57888"/>
        <dbReference type="ChEBI" id="CHEBI:15378"/>
        <dbReference type="ChEBI" id="CHEBI:24646"/>
        <dbReference type="ChEBI" id="CHEBI:57540"/>
        <dbReference type="ChEBI" id="CHEBI:57945"/>
        <dbReference type="ChEBI" id="CHEBI:132124"/>
    </reaction>
</comment>
<comment type="subunit">
    <text evidence="2">NDH-1 is composed of 14 different subunits. Subunits NuoB, C, D, E, F, and G constitute the peripheral sector of the complex.</text>
</comment>
<comment type="subcellular location">
    <subcellularLocation>
        <location evidence="2">Cell inner membrane</location>
        <topology evidence="2">Peripheral membrane protein</topology>
        <orientation evidence="2">Cytoplasmic side</orientation>
    </subcellularLocation>
</comment>
<comment type="similarity">
    <text evidence="2">Belongs to the complex I 49 kDa subunit family.</text>
</comment>
<evidence type="ECO:0000250" key="1"/>
<evidence type="ECO:0000255" key="2">
    <source>
        <dbReference type="HAMAP-Rule" id="MF_01358"/>
    </source>
</evidence>
<proteinExistence type="inferred from homology"/>
<protein>
    <recommendedName>
        <fullName evidence="2">NADH-quinone oxidoreductase subunit D</fullName>
        <ecNumber evidence="2">7.1.1.-</ecNumber>
    </recommendedName>
    <alternativeName>
        <fullName evidence="2">NADH dehydrogenase I subunit D</fullName>
    </alternativeName>
    <alternativeName>
        <fullName evidence="2">NDH-1 subunit D</fullName>
    </alternativeName>
</protein>